<gene>
    <name type="primary">PKSG1</name>
</gene>
<feature type="chain" id="PRO_0000421148" description="Polyketide synthase 1">
    <location>
        <begin position="1"/>
        <end position="385"/>
    </location>
</feature>
<feature type="active site" evidence="2">
    <location>
        <position position="157"/>
    </location>
</feature>
<sequence length="385" mass="42507">MNHLRAEGPASVLAIGTANPENILIQDEFPDYYFRVTKSEHMTQLKEKFRKICDKSMIRKRNIFLNEEHLKQNPKLVEHDVQTLDARQDMLVVEVPKLGKDACAKAIKEWGQPKSKITHLIFTSASTTDMPGADYHCAKLLGLSPSVKRVMMYQLGCYGGGTVLRIAKDIAENNKGARVLAVCCDIMACLFRGPSDSDLELLVGQAIFGDGAAAVIVGAEPDESVGERPIFELVSTGQTILPNSEGTIGGHIREAGLIFDLHKDVPMLISNNIEKCLIEAFTPIGISDWNSIFWITHPGGKAILDKVEEKLHLKSDKFVDSRHVLSEHGNMSSSTVLFVMDELRKRSLEEGKSTTGDGFEWGVLFGFGPGLTVERVVVRSVPIKY</sequence>
<proteinExistence type="evidence at transcript level"/>
<keyword id="KW-0012">Acyltransferase</keyword>
<keyword id="KW-0963">Cytoplasm</keyword>
<keyword id="KW-0808">Transferase</keyword>
<accession>F1LKH6</accession>
<comment type="function">
    <text evidence="1">Polyketide synthase responsible for the biosynthesis of secondary metabolites.</text>
</comment>
<comment type="subcellular location">
    <subcellularLocation>
        <location evidence="4">Cytoplasm</location>
    </subcellularLocation>
</comment>
<comment type="tissue specificity">
    <text evidence="3">Expressed in glandular trichomes.</text>
</comment>
<comment type="similarity">
    <text evidence="4">Belongs to the thiolase-like superfamily. Chalcone/stilbene synthases family.</text>
</comment>
<evidence type="ECO:0000250" key="1"/>
<evidence type="ECO:0000255" key="2">
    <source>
        <dbReference type="PROSITE-ProRule" id="PRU10023"/>
    </source>
</evidence>
<evidence type="ECO:0000269" key="3">
    <source>
    </source>
</evidence>
<evidence type="ECO:0000305" key="4"/>
<dbReference type="EC" id="2.3.1.-"/>
<dbReference type="EMBL" id="EU551163">
    <property type="protein sequence ID" value="ACD76853.1"/>
    <property type="molecule type" value="mRNA"/>
</dbReference>
<dbReference type="SMR" id="F1LKH6"/>
<dbReference type="Proteomes" id="UP000596661">
    <property type="component" value="Unplaced"/>
</dbReference>
<dbReference type="GO" id="GO:0005737">
    <property type="term" value="C:cytoplasm"/>
    <property type="evidence" value="ECO:0007669"/>
    <property type="project" value="UniProtKB-SubCell"/>
</dbReference>
<dbReference type="GO" id="GO:0016747">
    <property type="term" value="F:acyltransferase activity, transferring groups other than amino-acyl groups"/>
    <property type="evidence" value="ECO:0007669"/>
    <property type="project" value="InterPro"/>
</dbReference>
<dbReference type="GO" id="GO:0030639">
    <property type="term" value="P:polyketide biosynthetic process"/>
    <property type="evidence" value="ECO:0007669"/>
    <property type="project" value="TreeGrafter"/>
</dbReference>
<dbReference type="CDD" id="cd00831">
    <property type="entry name" value="CHS_like"/>
    <property type="match status" value="1"/>
</dbReference>
<dbReference type="FunFam" id="3.40.47.10:FF:000014">
    <property type="entry name" value="Chalcone synthase 1"/>
    <property type="match status" value="1"/>
</dbReference>
<dbReference type="FunFam" id="3.40.47.10:FF:000025">
    <property type="entry name" value="Chalcone synthase 2"/>
    <property type="match status" value="1"/>
</dbReference>
<dbReference type="Gene3D" id="3.40.47.10">
    <property type="match status" value="2"/>
</dbReference>
<dbReference type="InterPro" id="IPR012328">
    <property type="entry name" value="Chalcone/stilbene_synt_C"/>
</dbReference>
<dbReference type="InterPro" id="IPR001099">
    <property type="entry name" value="Chalcone/stilbene_synt_N"/>
</dbReference>
<dbReference type="InterPro" id="IPR018088">
    <property type="entry name" value="Chalcone/stilbene_synthase_AS"/>
</dbReference>
<dbReference type="InterPro" id="IPR011141">
    <property type="entry name" value="Polyketide_synthase_type-III"/>
</dbReference>
<dbReference type="InterPro" id="IPR016039">
    <property type="entry name" value="Thiolase-like"/>
</dbReference>
<dbReference type="PANTHER" id="PTHR11877:SF14">
    <property type="entry name" value="CHALCONE SYNTHASE"/>
    <property type="match status" value="1"/>
</dbReference>
<dbReference type="PANTHER" id="PTHR11877">
    <property type="entry name" value="HYDROXYMETHYLGLUTARYL-COA SYNTHASE"/>
    <property type="match status" value="1"/>
</dbReference>
<dbReference type="Pfam" id="PF02797">
    <property type="entry name" value="Chal_sti_synt_C"/>
    <property type="match status" value="1"/>
</dbReference>
<dbReference type="Pfam" id="PF00195">
    <property type="entry name" value="Chal_sti_synt_N"/>
    <property type="match status" value="1"/>
</dbReference>
<dbReference type="PIRSF" id="PIRSF000451">
    <property type="entry name" value="PKS_III"/>
    <property type="match status" value="1"/>
</dbReference>
<dbReference type="SUPFAM" id="SSF53901">
    <property type="entry name" value="Thiolase-like"/>
    <property type="match status" value="2"/>
</dbReference>
<dbReference type="PROSITE" id="PS00441">
    <property type="entry name" value="CHALCONE_SYNTH"/>
    <property type="match status" value="1"/>
</dbReference>
<reference key="1">
    <citation type="journal article" date="2010" name="Genet. Mol. Biol.">
        <title>In silicio expression analysis of PKS genes isolated from Cannabis sativa L.</title>
        <authorList>
            <person name="Flores-Sanchez I.J."/>
            <person name="Linthorst H.J."/>
            <person name="Verpoorte R."/>
        </authorList>
    </citation>
    <scope>NUCLEOTIDE SEQUENCE [MRNA]</scope>
    <scope>3D-STRUCTURE MODELING</scope>
    <scope>TISSUE SPECIFICITY</scope>
</reference>
<protein>
    <recommendedName>
        <fullName>Polyketide synthase 1</fullName>
        <ecNumber>2.3.1.-</ecNumber>
    </recommendedName>
</protein>
<organism>
    <name type="scientific">Cannabis sativa</name>
    <name type="common">Hemp</name>
    <name type="synonym">Marijuana</name>
    <dbReference type="NCBI Taxonomy" id="3483"/>
    <lineage>
        <taxon>Eukaryota</taxon>
        <taxon>Viridiplantae</taxon>
        <taxon>Streptophyta</taxon>
        <taxon>Embryophyta</taxon>
        <taxon>Tracheophyta</taxon>
        <taxon>Spermatophyta</taxon>
        <taxon>Magnoliopsida</taxon>
        <taxon>eudicotyledons</taxon>
        <taxon>Gunneridae</taxon>
        <taxon>Pentapetalae</taxon>
        <taxon>rosids</taxon>
        <taxon>fabids</taxon>
        <taxon>Rosales</taxon>
        <taxon>Cannabaceae</taxon>
        <taxon>Cannabis</taxon>
    </lineage>
</organism>
<name>PKSG1_CANSA</name>